<accession>Q74N14</accession>
<keyword id="KW-1185">Reference proteome</keyword>
<keyword id="KW-0687">Ribonucleoprotein</keyword>
<keyword id="KW-0689">Ribosomal protein</keyword>
<evidence type="ECO:0000255" key="1">
    <source>
        <dbReference type="HAMAP-Rule" id="MF_00359"/>
    </source>
</evidence>
<evidence type="ECO:0000305" key="2"/>
<organism>
    <name type="scientific">Nanoarchaeum equitans (strain Kin4-M)</name>
    <dbReference type="NCBI Taxonomy" id="228908"/>
    <lineage>
        <taxon>Archaea</taxon>
        <taxon>Nanobdellota</taxon>
        <taxon>Candidatus Nanoarchaeia</taxon>
        <taxon>Nanoarchaeales</taxon>
        <taxon>Nanoarchaeaceae</taxon>
        <taxon>Nanoarchaeum</taxon>
    </lineage>
</organism>
<sequence length="198" mass="23619">MAYNKKYADWKRKIWFTIKAPAIFNEVELGETPAYKPEQVIGRRVELNMALVTNNYQLQNYKGIFKITKVEGTTAKTELEGIKMYESIIQKWVEPGRDKITDSFVIKDKDNRLVRVKPVLITNRRLHRKQGTAIRNIWRNYFVELGKKLSFEDMVMKILNKEIPEQLKIQIKKIYPPLFFAIRQFYLEPREKHILLIE</sequence>
<gene>
    <name evidence="1" type="primary">rps3ae</name>
    <name type="ordered locus">NEQ375</name>
</gene>
<proteinExistence type="inferred from homology"/>
<dbReference type="EMBL" id="AE017199">
    <property type="protein sequence ID" value="AAR39223.1"/>
    <property type="status" value="ALT_INIT"/>
    <property type="molecule type" value="Genomic_DNA"/>
</dbReference>
<dbReference type="SMR" id="Q74N14"/>
<dbReference type="STRING" id="228908.NEQ375"/>
<dbReference type="EnsemblBacteria" id="AAR39223">
    <property type="protein sequence ID" value="AAR39223"/>
    <property type="gene ID" value="NEQ375"/>
</dbReference>
<dbReference type="KEGG" id="neq:NEQ375"/>
<dbReference type="HOGENOM" id="CLU_1217606_0_0_2"/>
<dbReference type="Proteomes" id="UP000000578">
    <property type="component" value="Chromosome"/>
</dbReference>
<dbReference type="GO" id="GO:1990904">
    <property type="term" value="C:ribonucleoprotein complex"/>
    <property type="evidence" value="ECO:0007669"/>
    <property type="project" value="UniProtKB-KW"/>
</dbReference>
<dbReference type="GO" id="GO:0005840">
    <property type="term" value="C:ribosome"/>
    <property type="evidence" value="ECO:0007669"/>
    <property type="project" value="UniProtKB-KW"/>
</dbReference>
<dbReference type="GO" id="GO:0003735">
    <property type="term" value="F:structural constituent of ribosome"/>
    <property type="evidence" value="ECO:0007669"/>
    <property type="project" value="InterPro"/>
</dbReference>
<dbReference type="GO" id="GO:0006412">
    <property type="term" value="P:translation"/>
    <property type="evidence" value="ECO:0007669"/>
    <property type="project" value="UniProtKB-UniRule"/>
</dbReference>
<dbReference type="HAMAP" id="MF_00359">
    <property type="entry name" value="Ribosomal_eS1"/>
    <property type="match status" value="1"/>
</dbReference>
<dbReference type="InterPro" id="IPR001593">
    <property type="entry name" value="Ribosomal_eS1"/>
</dbReference>
<dbReference type="InterPro" id="IPR030838">
    <property type="entry name" value="Ribosomal_eS1_arc"/>
</dbReference>
<dbReference type="NCBIfam" id="NF003142">
    <property type="entry name" value="PRK04057.1"/>
    <property type="match status" value="1"/>
</dbReference>
<dbReference type="Pfam" id="PF01015">
    <property type="entry name" value="Ribosomal_S3Ae"/>
    <property type="match status" value="1"/>
</dbReference>
<dbReference type="SMART" id="SM01397">
    <property type="entry name" value="Ribosomal_S3Ae"/>
    <property type="match status" value="1"/>
</dbReference>
<name>RS3A_NANEQ</name>
<reference key="1">
    <citation type="journal article" date="2003" name="Proc. Natl. Acad. Sci. U.S.A.">
        <title>The genome of Nanoarchaeum equitans: insights into early archaeal evolution and derived parasitism.</title>
        <authorList>
            <person name="Waters E."/>
            <person name="Hohn M.J."/>
            <person name="Ahel I."/>
            <person name="Graham D.E."/>
            <person name="Adams M.D."/>
            <person name="Barnstead M."/>
            <person name="Beeson K.Y."/>
            <person name="Bibbs L."/>
            <person name="Bolanos R."/>
            <person name="Keller M."/>
            <person name="Kretz K."/>
            <person name="Lin X."/>
            <person name="Mathur E."/>
            <person name="Ni J."/>
            <person name="Podar M."/>
            <person name="Richardson T."/>
            <person name="Sutton G.G."/>
            <person name="Simon M."/>
            <person name="Soell D."/>
            <person name="Stetter K.O."/>
            <person name="Short J.M."/>
            <person name="Noorderwier M."/>
        </authorList>
    </citation>
    <scope>NUCLEOTIDE SEQUENCE [LARGE SCALE GENOMIC DNA]</scope>
    <source>
        <strain>Kin4-M</strain>
    </source>
</reference>
<protein>
    <recommendedName>
        <fullName evidence="1">Small ribosomal subunit protein eS1</fullName>
    </recommendedName>
    <alternativeName>
        <fullName evidence="2">30S ribosomal protein S3Ae</fullName>
    </alternativeName>
    <alternativeName>
        <fullName evidence="1">Ribosomal protein S1e</fullName>
    </alternativeName>
</protein>
<feature type="chain" id="PRO_0000153553" description="Small ribosomal subunit protein eS1">
    <location>
        <begin position="1"/>
        <end position="198"/>
    </location>
</feature>
<comment type="similarity">
    <text evidence="1">Belongs to the eukaryotic ribosomal protein eS1 family.</text>
</comment>
<comment type="sequence caution" evidence="2">
    <conflict type="erroneous initiation">
        <sequence resource="EMBL-CDS" id="AAR39223"/>
    </conflict>
    <text>Extended N-terminus.</text>
</comment>